<dbReference type="EMBL" id="Z37997">
    <property type="protein sequence ID" value="CAA86093.1"/>
    <property type="molecule type" value="Genomic_DNA"/>
</dbReference>
<dbReference type="EMBL" id="BK006942">
    <property type="protein sequence ID" value="DAA08473.1"/>
    <property type="molecule type" value="Genomic_DNA"/>
</dbReference>
<dbReference type="PIR" id="S48367">
    <property type="entry name" value="S48367"/>
</dbReference>
<dbReference type="SMR" id="P40508"/>
<dbReference type="BioGRID" id="34915">
    <property type="interactions" value="113"/>
</dbReference>
<dbReference type="DIP" id="DIP-5434N"/>
<dbReference type="FunCoup" id="P40508">
    <property type="interactions" value="65"/>
</dbReference>
<dbReference type="IntAct" id="P40508">
    <property type="interactions" value="19"/>
</dbReference>
<dbReference type="STRING" id="4932.YIL077C"/>
<dbReference type="iPTMnet" id="P40508"/>
<dbReference type="PaxDb" id="4932-YIL077C"/>
<dbReference type="PeptideAtlas" id="P40508"/>
<dbReference type="EnsemblFungi" id="YIL077C_mRNA">
    <property type="protein sequence ID" value="YIL077C"/>
    <property type="gene ID" value="YIL077C"/>
</dbReference>
<dbReference type="KEGG" id="sce:YIL077C"/>
<dbReference type="AGR" id="SGD:S000001339"/>
<dbReference type="SGD" id="S000001339">
    <property type="gene designation" value="YIL077C"/>
</dbReference>
<dbReference type="VEuPathDB" id="FungiDB:YIL077C"/>
<dbReference type="eggNOG" id="ENOG502S01E">
    <property type="taxonomic scope" value="Eukaryota"/>
</dbReference>
<dbReference type="HOGENOM" id="CLU_072880_0_0_1"/>
<dbReference type="InParanoid" id="P40508"/>
<dbReference type="OMA" id="EHIMKDP"/>
<dbReference type="OrthoDB" id="4036490at2759"/>
<dbReference type="BioCyc" id="YEAST:G3O-31342-MONOMER"/>
<dbReference type="BioGRID-ORCS" id="854733">
    <property type="hits" value="1 hit in 10 CRISPR screens"/>
</dbReference>
<dbReference type="PRO" id="PR:P40508"/>
<dbReference type="Proteomes" id="UP000002311">
    <property type="component" value="Chromosome IX"/>
</dbReference>
<dbReference type="RNAct" id="P40508">
    <property type="molecule type" value="protein"/>
</dbReference>
<dbReference type="GO" id="GO:0031966">
    <property type="term" value="C:mitochondrial membrane"/>
    <property type="evidence" value="ECO:0007669"/>
    <property type="project" value="UniProtKB-SubCell"/>
</dbReference>
<dbReference type="GO" id="GO:0005739">
    <property type="term" value="C:mitochondrion"/>
    <property type="evidence" value="ECO:0007005"/>
    <property type="project" value="SGD"/>
</dbReference>
<dbReference type="InterPro" id="IPR012470">
    <property type="entry name" value="Pup1-like"/>
</dbReference>
<dbReference type="Pfam" id="PF07954">
    <property type="entry name" value="DUF1689"/>
    <property type="match status" value="1"/>
</dbReference>
<organism>
    <name type="scientific">Saccharomyces cerevisiae (strain ATCC 204508 / S288c)</name>
    <name type="common">Baker's yeast</name>
    <dbReference type="NCBI Taxonomy" id="559292"/>
    <lineage>
        <taxon>Eukaryota</taxon>
        <taxon>Fungi</taxon>
        <taxon>Dikarya</taxon>
        <taxon>Ascomycota</taxon>
        <taxon>Saccharomycotina</taxon>
        <taxon>Saccharomycetes</taxon>
        <taxon>Saccharomycetales</taxon>
        <taxon>Saccharomycetaceae</taxon>
        <taxon>Saccharomyces</taxon>
    </lineage>
</organism>
<keyword id="KW-0472">Membrane</keyword>
<keyword id="KW-0496">Mitochondrion</keyword>
<keyword id="KW-0597">Phosphoprotein</keyword>
<keyword id="KW-1185">Reference proteome</keyword>
<keyword id="KW-0812">Transmembrane</keyword>
<keyword id="KW-1133">Transmembrane helix</keyword>
<protein>
    <recommendedName>
        <fullName>PUP1 protein homolog</fullName>
    </recommendedName>
</protein>
<accession>P40508</accession>
<accession>D6VVK7</accession>
<comment type="subcellular location">
    <subcellularLocation>
        <location evidence="4">Mitochondrion membrane</location>
        <topology evidence="1">Multi-pass membrane protein</topology>
    </subcellularLocation>
</comment>
<comment type="miscellaneous">
    <text evidence="3">Present with 922 molecules/cell in log phase SD medium.</text>
</comment>
<comment type="similarity">
    <text>Belongs to the PUP1 family.</text>
</comment>
<reference key="1">
    <citation type="journal article" date="1997" name="Nature">
        <title>The nucleotide sequence of Saccharomyces cerevisiae chromosome IX.</title>
        <authorList>
            <person name="Churcher C.M."/>
            <person name="Bowman S."/>
            <person name="Badcock K."/>
            <person name="Bankier A.T."/>
            <person name="Brown D."/>
            <person name="Chillingworth T."/>
            <person name="Connor R."/>
            <person name="Devlin K."/>
            <person name="Gentles S."/>
            <person name="Hamlin N."/>
            <person name="Harris D.E."/>
            <person name="Horsnell T."/>
            <person name="Hunt S."/>
            <person name="Jagels K."/>
            <person name="Jones M."/>
            <person name="Lye G."/>
            <person name="Moule S."/>
            <person name="Odell C."/>
            <person name="Pearson D."/>
            <person name="Rajandream M.A."/>
            <person name="Rice P."/>
            <person name="Rowley N."/>
            <person name="Skelton J."/>
            <person name="Smith V."/>
            <person name="Walsh S.V."/>
            <person name="Whitehead S."/>
            <person name="Barrell B.G."/>
        </authorList>
    </citation>
    <scope>NUCLEOTIDE SEQUENCE [LARGE SCALE GENOMIC DNA]</scope>
    <source>
        <strain>ATCC 204508 / S288c</strain>
    </source>
</reference>
<reference key="2">
    <citation type="journal article" date="2014" name="G3 (Bethesda)">
        <title>The reference genome sequence of Saccharomyces cerevisiae: Then and now.</title>
        <authorList>
            <person name="Engel S.R."/>
            <person name="Dietrich F.S."/>
            <person name="Fisk D.G."/>
            <person name="Binkley G."/>
            <person name="Balakrishnan R."/>
            <person name="Costanzo M.C."/>
            <person name="Dwight S.S."/>
            <person name="Hitz B.C."/>
            <person name="Karra K."/>
            <person name="Nash R.S."/>
            <person name="Weng S."/>
            <person name="Wong E.D."/>
            <person name="Lloyd P."/>
            <person name="Skrzypek M.S."/>
            <person name="Miyasato S.R."/>
            <person name="Simison M."/>
            <person name="Cherry J.M."/>
        </authorList>
    </citation>
    <scope>GENOME REANNOTATION</scope>
    <source>
        <strain>ATCC 204508 / S288c</strain>
    </source>
</reference>
<reference key="3">
    <citation type="journal article" date="2003" name="Nature">
        <title>Global analysis of protein expression in yeast.</title>
        <authorList>
            <person name="Ghaemmaghami S."/>
            <person name="Huh W.-K."/>
            <person name="Bower K."/>
            <person name="Howson R.W."/>
            <person name="Belle A."/>
            <person name="Dephoure N."/>
            <person name="O'Shea E.K."/>
            <person name="Weissman J.S."/>
        </authorList>
    </citation>
    <scope>LEVEL OF PROTEIN EXPRESSION [LARGE SCALE ANALYSIS]</scope>
</reference>
<reference key="4">
    <citation type="journal article" date="2006" name="J. Proteome Res.">
        <title>Toward the complete yeast mitochondrial proteome: multidimensional separation techniques for mitochondrial proteomics.</title>
        <authorList>
            <person name="Reinders J."/>
            <person name="Zahedi R.P."/>
            <person name="Pfanner N."/>
            <person name="Meisinger C."/>
            <person name="Sickmann A."/>
        </authorList>
    </citation>
    <scope>SUBCELLULAR LOCATION [LARGE SCALE ANALYSIS]</scope>
    <scope>IDENTIFICATION BY MASS SPECTROMETRY</scope>
</reference>
<reference key="5">
    <citation type="journal article" date="2009" name="Science">
        <title>Global analysis of Cdk1 substrate phosphorylation sites provides insights into evolution.</title>
        <authorList>
            <person name="Holt L.J."/>
            <person name="Tuch B.B."/>
            <person name="Villen J."/>
            <person name="Johnson A.D."/>
            <person name="Gygi S.P."/>
            <person name="Morgan D.O."/>
        </authorList>
    </citation>
    <scope>PHOSPHORYLATION [LARGE SCALE ANALYSIS] AT SER-230</scope>
    <scope>IDENTIFICATION BY MASS SPECTROMETRY [LARGE SCALE ANALYSIS]</scope>
</reference>
<proteinExistence type="evidence at protein level"/>
<feature type="chain" id="PRO_0000202980" description="PUP1 protein homolog">
    <location>
        <begin position="1"/>
        <end position="320"/>
    </location>
</feature>
<feature type="transmembrane region" description="Helical" evidence="1">
    <location>
        <begin position="66"/>
        <end position="85"/>
    </location>
</feature>
<feature type="transmembrane region" description="Helical" evidence="1">
    <location>
        <begin position="100"/>
        <end position="119"/>
    </location>
</feature>
<feature type="region of interest" description="Disordered" evidence="2">
    <location>
        <begin position="205"/>
        <end position="320"/>
    </location>
</feature>
<feature type="compositionally biased region" description="Polar residues" evidence="2">
    <location>
        <begin position="253"/>
        <end position="266"/>
    </location>
</feature>
<feature type="compositionally biased region" description="Basic and acidic residues" evidence="2">
    <location>
        <begin position="267"/>
        <end position="284"/>
    </location>
</feature>
<feature type="modified residue" description="Phosphoserine" evidence="5">
    <location>
        <position position="230"/>
    </location>
</feature>
<name>PUP1_YEAST</name>
<evidence type="ECO:0000255" key="1"/>
<evidence type="ECO:0000256" key="2">
    <source>
        <dbReference type="SAM" id="MobiDB-lite"/>
    </source>
</evidence>
<evidence type="ECO:0000269" key="3">
    <source>
    </source>
</evidence>
<evidence type="ECO:0000269" key="4">
    <source>
    </source>
</evidence>
<evidence type="ECO:0007744" key="5">
    <source>
    </source>
</evidence>
<sequence>MLGKEEEQQYGQNGKGMENELPFMKRPWFKKAYENAIEFHEKDELLDARDRLELSKAYRSIAKAEMWGGWLGFSAVFLTPFAYRYYKTKAIKGVKVPRNFVLGVMALFFATNFAGRSMYTRQLNERDPTGVLKDNYSNKYGDNDFGAFQHDQTKEIPRNQRQYNMMRLLDSGSPSRWSMYFYITYQNPERRLPDPKVKLQQMKKGGVFNGSPFMNQRDPIGLYRNKGRKSPDPIEGEQNDSPVLSSWEKIRNGDNSSSSSWENIRNTSRDQSQESDASVDHESDIFISGFSDDGNATDNSSSDDKYQRLLQSGRYGGNRS</sequence>
<gene>
    <name type="ordered locus">YIL077C</name>
</gene>